<proteinExistence type="inferred from homology"/>
<reference key="1">
    <citation type="journal article" date="2005" name="J. Bacteriol.">
        <title>Swine and poultry pathogens: the complete genome sequences of two strains of Mycoplasma hyopneumoniae and a strain of Mycoplasma synoviae.</title>
        <authorList>
            <person name="Vasconcelos A.T.R."/>
            <person name="Ferreira H.B."/>
            <person name="Bizarro C.V."/>
            <person name="Bonatto S.L."/>
            <person name="Carvalho M.O."/>
            <person name="Pinto P.M."/>
            <person name="Almeida D.F."/>
            <person name="Almeida L.G.P."/>
            <person name="Almeida R."/>
            <person name="Alves-Junior L."/>
            <person name="Assuncao E.N."/>
            <person name="Azevedo V.A.C."/>
            <person name="Bogo M.R."/>
            <person name="Brigido M.M."/>
            <person name="Brocchi M."/>
            <person name="Burity H.A."/>
            <person name="Camargo A.A."/>
            <person name="Camargo S.S."/>
            <person name="Carepo M.S."/>
            <person name="Carraro D.M."/>
            <person name="de Mattos Cascardo J.C."/>
            <person name="Castro L.A."/>
            <person name="Cavalcanti G."/>
            <person name="Chemale G."/>
            <person name="Collevatti R.G."/>
            <person name="Cunha C.W."/>
            <person name="Dallagiovanna B."/>
            <person name="Dambros B.P."/>
            <person name="Dellagostin O.A."/>
            <person name="Falcao C."/>
            <person name="Fantinatti-Garboggini F."/>
            <person name="Felipe M.S.S."/>
            <person name="Fiorentin L."/>
            <person name="Franco G.R."/>
            <person name="Freitas N.S.A."/>
            <person name="Frias D."/>
            <person name="Grangeiro T.B."/>
            <person name="Grisard E.C."/>
            <person name="Guimaraes C.T."/>
            <person name="Hungria M."/>
            <person name="Jardim S.N."/>
            <person name="Krieger M.A."/>
            <person name="Laurino J.P."/>
            <person name="Lima L.F.A."/>
            <person name="Lopes M.I."/>
            <person name="Loreto E.L.S."/>
            <person name="Madeira H.M.F."/>
            <person name="Manfio G.P."/>
            <person name="Maranhao A.Q."/>
            <person name="Martinkovics C.T."/>
            <person name="Medeiros S.R.B."/>
            <person name="Moreira M.A.M."/>
            <person name="Neiva M."/>
            <person name="Ramalho-Neto C.E."/>
            <person name="Nicolas M.F."/>
            <person name="Oliveira S.C."/>
            <person name="Paixao R.F.C."/>
            <person name="Pedrosa F.O."/>
            <person name="Pena S.D.J."/>
            <person name="Pereira M."/>
            <person name="Pereira-Ferrari L."/>
            <person name="Piffer I."/>
            <person name="Pinto L.S."/>
            <person name="Potrich D.P."/>
            <person name="Salim A.C.M."/>
            <person name="Santos F.R."/>
            <person name="Schmitt R."/>
            <person name="Schneider M.P.C."/>
            <person name="Schrank A."/>
            <person name="Schrank I.S."/>
            <person name="Schuck A.F."/>
            <person name="Seuanez H.N."/>
            <person name="Silva D.W."/>
            <person name="Silva R."/>
            <person name="Silva S.C."/>
            <person name="Soares C.M.A."/>
            <person name="Souza K.R.L."/>
            <person name="Souza R.C."/>
            <person name="Staats C.C."/>
            <person name="Steffens M.B.R."/>
            <person name="Teixeira S.M.R."/>
            <person name="Urmenyi T.P."/>
            <person name="Vainstein M.H."/>
            <person name="Zuccherato L.W."/>
            <person name="Simpson A.J.G."/>
            <person name="Zaha A."/>
        </authorList>
    </citation>
    <scope>NUCLEOTIDE SEQUENCE [LARGE SCALE GENOMIC DNA]</scope>
    <source>
        <strain>7448</strain>
    </source>
</reference>
<gene>
    <name evidence="1" type="primary">trmD</name>
    <name type="ordered locus">MHP7448_0285</name>
</gene>
<accession>Q4A880</accession>
<name>TRMD_MESH7</name>
<dbReference type="EC" id="2.1.1.228" evidence="1"/>
<dbReference type="EMBL" id="AE017244">
    <property type="protein sequence ID" value="AAZ53659.1"/>
    <property type="molecule type" value="Genomic_DNA"/>
</dbReference>
<dbReference type="RefSeq" id="WP_011284056.1">
    <property type="nucleotide sequence ID" value="NC_007332.1"/>
</dbReference>
<dbReference type="SMR" id="Q4A880"/>
<dbReference type="GeneID" id="41334588"/>
<dbReference type="KEGG" id="mhp:MHP7448_0285"/>
<dbReference type="HOGENOM" id="CLU_047363_0_1_14"/>
<dbReference type="Proteomes" id="UP000000553">
    <property type="component" value="Chromosome"/>
</dbReference>
<dbReference type="GO" id="GO:0005829">
    <property type="term" value="C:cytosol"/>
    <property type="evidence" value="ECO:0007669"/>
    <property type="project" value="TreeGrafter"/>
</dbReference>
<dbReference type="GO" id="GO:0052906">
    <property type="term" value="F:tRNA (guanine(37)-N1)-methyltransferase activity"/>
    <property type="evidence" value="ECO:0007669"/>
    <property type="project" value="UniProtKB-UniRule"/>
</dbReference>
<dbReference type="GO" id="GO:0002939">
    <property type="term" value="P:tRNA N1-guanine methylation"/>
    <property type="evidence" value="ECO:0007669"/>
    <property type="project" value="TreeGrafter"/>
</dbReference>
<dbReference type="CDD" id="cd18080">
    <property type="entry name" value="TrmD-like"/>
    <property type="match status" value="1"/>
</dbReference>
<dbReference type="FunFam" id="3.40.1280.10:FF:000001">
    <property type="entry name" value="tRNA (guanine-N(1)-)-methyltransferase"/>
    <property type="match status" value="1"/>
</dbReference>
<dbReference type="Gene3D" id="3.40.1280.10">
    <property type="match status" value="1"/>
</dbReference>
<dbReference type="Gene3D" id="1.10.1270.20">
    <property type="entry name" value="tRNA(m1g37)methyltransferase, domain 2"/>
    <property type="match status" value="1"/>
</dbReference>
<dbReference type="HAMAP" id="MF_00605">
    <property type="entry name" value="TrmD"/>
    <property type="match status" value="1"/>
</dbReference>
<dbReference type="InterPro" id="IPR029028">
    <property type="entry name" value="Alpha/beta_knot_MTases"/>
</dbReference>
<dbReference type="InterPro" id="IPR023148">
    <property type="entry name" value="tRNA_m1G_MeTrfase_C_sf"/>
</dbReference>
<dbReference type="InterPro" id="IPR002649">
    <property type="entry name" value="tRNA_m1G_MeTrfase_TrmD"/>
</dbReference>
<dbReference type="InterPro" id="IPR029026">
    <property type="entry name" value="tRNA_m1G_MTases_N"/>
</dbReference>
<dbReference type="InterPro" id="IPR016009">
    <property type="entry name" value="tRNA_MeTrfase_TRMD/TRM10"/>
</dbReference>
<dbReference type="NCBIfam" id="NF000648">
    <property type="entry name" value="PRK00026.1"/>
    <property type="match status" value="1"/>
</dbReference>
<dbReference type="NCBIfam" id="TIGR00088">
    <property type="entry name" value="trmD"/>
    <property type="match status" value="1"/>
</dbReference>
<dbReference type="PANTHER" id="PTHR46417">
    <property type="entry name" value="TRNA (GUANINE-N(1)-)-METHYLTRANSFERASE"/>
    <property type="match status" value="1"/>
</dbReference>
<dbReference type="PANTHER" id="PTHR46417:SF1">
    <property type="entry name" value="TRNA (GUANINE-N(1)-)-METHYLTRANSFERASE"/>
    <property type="match status" value="1"/>
</dbReference>
<dbReference type="Pfam" id="PF01746">
    <property type="entry name" value="tRNA_m1G_MT"/>
    <property type="match status" value="1"/>
</dbReference>
<dbReference type="PIRSF" id="PIRSF000386">
    <property type="entry name" value="tRNA_mtase"/>
    <property type="match status" value="1"/>
</dbReference>
<dbReference type="SUPFAM" id="SSF75217">
    <property type="entry name" value="alpha/beta knot"/>
    <property type="match status" value="1"/>
</dbReference>
<evidence type="ECO:0000255" key="1">
    <source>
        <dbReference type="HAMAP-Rule" id="MF_00605"/>
    </source>
</evidence>
<feature type="chain" id="PRO_0000257434" description="tRNA (guanine-N(1)-)-methyltransferase">
    <location>
        <begin position="1"/>
        <end position="227"/>
    </location>
</feature>
<feature type="binding site" evidence="1">
    <location>
        <position position="107"/>
    </location>
    <ligand>
        <name>S-adenosyl-L-methionine</name>
        <dbReference type="ChEBI" id="CHEBI:59789"/>
    </ligand>
</feature>
<feature type="binding site" evidence="1">
    <location>
        <begin position="127"/>
        <end position="132"/>
    </location>
    <ligand>
        <name>S-adenosyl-L-methionine</name>
        <dbReference type="ChEBI" id="CHEBI:59789"/>
    </ligand>
</feature>
<organism>
    <name type="scientific">Mesomycoplasma hyopneumoniae (strain 7448)</name>
    <name type="common">Mycoplasma hyopneumoniae</name>
    <dbReference type="NCBI Taxonomy" id="262722"/>
    <lineage>
        <taxon>Bacteria</taxon>
        <taxon>Bacillati</taxon>
        <taxon>Mycoplasmatota</taxon>
        <taxon>Mycoplasmoidales</taxon>
        <taxon>Metamycoplasmataceae</taxon>
        <taxon>Mesomycoplasma</taxon>
    </lineage>
</organism>
<protein>
    <recommendedName>
        <fullName evidence="1">tRNA (guanine-N(1)-)-methyltransferase</fullName>
        <ecNumber evidence="1">2.1.1.228</ecNumber>
    </recommendedName>
    <alternativeName>
        <fullName evidence="1">M1G-methyltransferase</fullName>
    </alternativeName>
    <alternativeName>
        <fullName evidence="1">tRNA [GM37] methyltransferase</fullName>
    </alternativeName>
</protein>
<sequence>MKINILTLFPRYFEVFCRESIIGKAIKQKKITINVVNFRDFSKNKHKKVDDYVYGGGPGLLLQIQPVVDALEKVGGLKIALSPQGQKFDQSVARKLAKEDEITILCGHYEGFDQRIIDNFIDFELSLGDFILTGGEIAAMAIIDAIIRLKPDIINPESLKNETFNDFLLDFPQYSRPANFRGLEVPKVLISGNHREIGEWRQEQRELITKKKRPDLWEKFLKIKNKK</sequence>
<keyword id="KW-0963">Cytoplasm</keyword>
<keyword id="KW-0489">Methyltransferase</keyword>
<keyword id="KW-0949">S-adenosyl-L-methionine</keyword>
<keyword id="KW-0808">Transferase</keyword>
<keyword id="KW-0819">tRNA processing</keyword>
<comment type="function">
    <text evidence="1">Specifically methylates guanosine-37 in various tRNAs.</text>
</comment>
<comment type="catalytic activity">
    <reaction evidence="1">
        <text>guanosine(37) in tRNA + S-adenosyl-L-methionine = N(1)-methylguanosine(37) in tRNA + S-adenosyl-L-homocysteine + H(+)</text>
        <dbReference type="Rhea" id="RHEA:36899"/>
        <dbReference type="Rhea" id="RHEA-COMP:10145"/>
        <dbReference type="Rhea" id="RHEA-COMP:10147"/>
        <dbReference type="ChEBI" id="CHEBI:15378"/>
        <dbReference type="ChEBI" id="CHEBI:57856"/>
        <dbReference type="ChEBI" id="CHEBI:59789"/>
        <dbReference type="ChEBI" id="CHEBI:73542"/>
        <dbReference type="ChEBI" id="CHEBI:74269"/>
        <dbReference type="EC" id="2.1.1.228"/>
    </reaction>
</comment>
<comment type="subunit">
    <text evidence="1">Homodimer.</text>
</comment>
<comment type="subcellular location">
    <subcellularLocation>
        <location evidence="1">Cytoplasm</location>
    </subcellularLocation>
</comment>
<comment type="similarity">
    <text evidence="1">Belongs to the RNA methyltransferase TrmD family.</text>
</comment>